<comment type="function">
    <text evidence="1">Required for the formation of a threonylcarbamoyl group on adenosine at position 37 (t(6)A37) in tRNAs that read codons beginning with adenine. Is involved in the transfer of the threonylcarbamoyl moiety of threonylcarbamoyl-AMP (TC-AMP) to the N6 group of A37, together with TsaE and TsaB. TsaD likely plays a direct catalytic role in this reaction.</text>
</comment>
<comment type="catalytic activity">
    <reaction evidence="1">
        <text>L-threonylcarbamoyladenylate + adenosine(37) in tRNA = N(6)-L-threonylcarbamoyladenosine(37) in tRNA + AMP + H(+)</text>
        <dbReference type="Rhea" id="RHEA:37059"/>
        <dbReference type="Rhea" id="RHEA-COMP:10162"/>
        <dbReference type="Rhea" id="RHEA-COMP:10163"/>
        <dbReference type="ChEBI" id="CHEBI:15378"/>
        <dbReference type="ChEBI" id="CHEBI:73682"/>
        <dbReference type="ChEBI" id="CHEBI:74411"/>
        <dbReference type="ChEBI" id="CHEBI:74418"/>
        <dbReference type="ChEBI" id="CHEBI:456215"/>
        <dbReference type="EC" id="2.3.1.234"/>
    </reaction>
</comment>
<comment type="cofactor">
    <cofactor evidence="1">
        <name>Fe(2+)</name>
        <dbReference type="ChEBI" id="CHEBI:29033"/>
    </cofactor>
    <text evidence="1">Binds 1 Fe(2+) ion per subunit.</text>
</comment>
<comment type="subcellular location">
    <subcellularLocation>
        <location evidence="1">Cytoplasm</location>
    </subcellularLocation>
</comment>
<comment type="similarity">
    <text evidence="1">Belongs to the KAE1 / TsaD family.</text>
</comment>
<sequence>MRAVWVLGIDTSCDDTGVGLVRDGKVVVNLVASQVRLHEAFGGVVPELASREHLKALPLLVERALAEAGLRPKDLDLVAATRGPGLIGALLVGYTFAKGMAFALDRPFYAVHHLEGHIAAAWPEGLPPPFLALVASGGHTHLYEVLDLGRYRLLGATRDDAAGEAFDKVARLLGLGFPGGPEVERLAEEAEEAIPFPVPLRGQEGYDFSFSGLKTKALHLVEKGLPKAALAKGFQEAAIAHLAEVVLKAAKDTGHRVLLVAGGVAANRALQERFKEAGLEVHFPPRGLSQDNGAMIALAAWRRHQRGFPPSPLSLGATAYWPLEEA</sequence>
<gene>
    <name evidence="1" type="primary">tsaD</name>
    <name type="synonym">gcp</name>
    <name type="ordered locus">TTHA1252</name>
</gene>
<feature type="chain" id="PRO_0000303597" description="tRNA N6-adenosine threonylcarbamoyltransferase">
    <location>
        <begin position="1"/>
        <end position="326"/>
    </location>
</feature>
<feature type="binding site" evidence="1">
    <location>
        <position position="113"/>
    </location>
    <ligand>
        <name>Fe cation</name>
        <dbReference type="ChEBI" id="CHEBI:24875"/>
    </ligand>
</feature>
<feature type="binding site" evidence="1">
    <location>
        <position position="117"/>
    </location>
    <ligand>
        <name>Fe cation</name>
        <dbReference type="ChEBI" id="CHEBI:24875"/>
    </ligand>
</feature>
<feature type="binding site" evidence="1">
    <location>
        <begin position="134"/>
        <end position="138"/>
    </location>
    <ligand>
        <name>substrate</name>
    </ligand>
</feature>
<feature type="binding site" evidence="1">
    <location>
        <position position="167"/>
    </location>
    <ligand>
        <name>substrate</name>
    </ligand>
</feature>
<feature type="binding site" evidence="1">
    <location>
        <position position="180"/>
    </location>
    <ligand>
        <name>substrate</name>
    </ligand>
</feature>
<feature type="binding site" evidence="1">
    <location>
        <position position="267"/>
    </location>
    <ligand>
        <name>substrate</name>
    </ligand>
</feature>
<feature type="binding site" evidence="1">
    <location>
        <position position="291"/>
    </location>
    <ligand>
        <name>Fe cation</name>
        <dbReference type="ChEBI" id="CHEBI:24875"/>
    </ligand>
</feature>
<evidence type="ECO:0000255" key="1">
    <source>
        <dbReference type="HAMAP-Rule" id="MF_01445"/>
    </source>
</evidence>
<accession>Q5SIW2</accession>
<keyword id="KW-0012">Acyltransferase</keyword>
<keyword id="KW-0963">Cytoplasm</keyword>
<keyword id="KW-0408">Iron</keyword>
<keyword id="KW-0479">Metal-binding</keyword>
<keyword id="KW-1185">Reference proteome</keyword>
<keyword id="KW-0808">Transferase</keyword>
<keyword id="KW-0819">tRNA processing</keyword>
<organism>
    <name type="scientific">Thermus thermophilus (strain ATCC 27634 / DSM 579 / HB8)</name>
    <dbReference type="NCBI Taxonomy" id="300852"/>
    <lineage>
        <taxon>Bacteria</taxon>
        <taxon>Thermotogati</taxon>
        <taxon>Deinococcota</taxon>
        <taxon>Deinococci</taxon>
        <taxon>Thermales</taxon>
        <taxon>Thermaceae</taxon>
        <taxon>Thermus</taxon>
    </lineage>
</organism>
<name>TSAD_THET8</name>
<protein>
    <recommendedName>
        <fullName evidence="1">tRNA N6-adenosine threonylcarbamoyltransferase</fullName>
        <ecNumber evidence="1">2.3.1.234</ecNumber>
    </recommendedName>
    <alternativeName>
        <fullName evidence="1">N6-L-threonylcarbamoyladenine synthase</fullName>
        <shortName evidence="1">t(6)A synthase</shortName>
    </alternativeName>
    <alternativeName>
        <fullName evidence="1">t(6)A37 threonylcarbamoyladenosine biosynthesis protein TsaD</fullName>
    </alternativeName>
    <alternativeName>
        <fullName evidence="1">tRNA threonylcarbamoyladenosine biosynthesis protein TsaD</fullName>
    </alternativeName>
</protein>
<reference key="1">
    <citation type="submission" date="2004-11" db="EMBL/GenBank/DDBJ databases">
        <title>Complete genome sequence of Thermus thermophilus HB8.</title>
        <authorList>
            <person name="Masui R."/>
            <person name="Kurokawa K."/>
            <person name="Nakagawa N."/>
            <person name="Tokunaga F."/>
            <person name="Koyama Y."/>
            <person name="Shibata T."/>
            <person name="Oshima T."/>
            <person name="Yokoyama S."/>
            <person name="Yasunaga T."/>
            <person name="Kuramitsu S."/>
        </authorList>
    </citation>
    <scope>NUCLEOTIDE SEQUENCE [LARGE SCALE GENOMIC DNA]</scope>
    <source>
        <strain>ATCC 27634 / DSM 579 / HB8</strain>
    </source>
</reference>
<dbReference type="EC" id="2.3.1.234" evidence="1"/>
<dbReference type="EMBL" id="AP008226">
    <property type="protein sequence ID" value="BAD71075.1"/>
    <property type="molecule type" value="Genomic_DNA"/>
</dbReference>
<dbReference type="RefSeq" id="YP_144518.2">
    <property type="nucleotide sequence ID" value="NC_006461.1"/>
</dbReference>
<dbReference type="SMR" id="Q5SIW2"/>
<dbReference type="EnsemblBacteria" id="BAD71075">
    <property type="protein sequence ID" value="BAD71075"/>
    <property type="gene ID" value="BAD71075"/>
</dbReference>
<dbReference type="KEGG" id="ttj:TTHA1252"/>
<dbReference type="PATRIC" id="fig|300852.9.peg.1231"/>
<dbReference type="eggNOG" id="COG0533">
    <property type="taxonomic scope" value="Bacteria"/>
</dbReference>
<dbReference type="HOGENOM" id="CLU_023208_0_2_0"/>
<dbReference type="Proteomes" id="UP000000532">
    <property type="component" value="Chromosome"/>
</dbReference>
<dbReference type="GO" id="GO:0005737">
    <property type="term" value="C:cytoplasm"/>
    <property type="evidence" value="ECO:0007669"/>
    <property type="project" value="UniProtKB-SubCell"/>
</dbReference>
<dbReference type="GO" id="GO:0005506">
    <property type="term" value="F:iron ion binding"/>
    <property type="evidence" value="ECO:0007669"/>
    <property type="project" value="UniProtKB-UniRule"/>
</dbReference>
<dbReference type="GO" id="GO:0061711">
    <property type="term" value="F:N(6)-L-threonylcarbamoyladenine synthase activity"/>
    <property type="evidence" value="ECO:0007669"/>
    <property type="project" value="UniProtKB-EC"/>
</dbReference>
<dbReference type="GO" id="GO:0002949">
    <property type="term" value="P:tRNA threonylcarbamoyladenosine modification"/>
    <property type="evidence" value="ECO:0007669"/>
    <property type="project" value="UniProtKB-UniRule"/>
</dbReference>
<dbReference type="CDD" id="cd24133">
    <property type="entry name" value="ASKHA_NBD_TsaD_bac"/>
    <property type="match status" value="1"/>
</dbReference>
<dbReference type="FunFam" id="3.30.420.40:FF:000012">
    <property type="entry name" value="tRNA N6-adenosine threonylcarbamoyltransferase"/>
    <property type="match status" value="1"/>
</dbReference>
<dbReference type="Gene3D" id="3.30.420.40">
    <property type="match status" value="2"/>
</dbReference>
<dbReference type="HAMAP" id="MF_01445">
    <property type="entry name" value="TsaD"/>
    <property type="match status" value="1"/>
</dbReference>
<dbReference type="InterPro" id="IPR043129">
    <property type="entry name" value="ATPase_NBD"/>
</dbReference>
<dbReference type="InterPro" id="IPR000905">
    <property type="entry name" value="Gcp-like_dom"/>
</dbReference>
<dbReference type="InterPro" id="IPR017861">
    <property type="entry name" value="KAE1/TsaD"/>
</dbReference>
<dbReference type="InterPro" id="IPR017860">
    <property type="entry name" value="Peptidase_M22_CS"/>
</dbReference>
<dbReference type="InterPro" id="IPR022450">
    <property type="entry name" value="TsaD"/>
</dbReference>
<dbReference type="NCBIfam" id="TIGR00329">
    <property type="entry name" value="gcp_kae1"/>
    <property type="match status" value="1"/>
</dbReference>
<dbReference type="NCBIfam" id="TIGR03723">
    <property type="entry name" value="T6A_TsaD_YgjD"/>
    <property type="match status" value="1"/>
</dbReference>
<dbReference type="PANTHER" id="PTHR11735">
    <property type="entry name" value="TRNA N6-ADENOSINE THREONYLCARBAMOYLTRANSFERASE"/>
    <property type="match status" value="1"/>
</dbReference>
<dbReference type="PANTHER" id="PTHR11735:SF6">
    <property type="entry name" value="TRNA N6-ADENOSINE THREONYLCARBAMOYLTRANSFERASE, MITOCHONDRIAL"/>
    <property type="match status" value="1"/>
</dbReference>
<dbReference type="Pfam" id="PF00814">
    <property type="entry name" value="TsaD"/>
    <property type="match status" value="1"/>
</dbReference>
<dbReference type="PRINTS" id="PR00789">
    <property type="entry name" value="OSIALOPTASE"/>
</dbReference>
<dbReference type="SUPFAM" id="SSF53067">
    <property type="entry name" value="Actin-like ATPase domain"/>
    <property type="match status" value="1"/>
</dbReference>
<dbReference type="PROSITE" id="PS01016">
    <property type="entry name" value="GLYCOPROTEASE"/>
    <property type="match status" value="1"/>
</dbReference>
<proteinExistence type="inferred from homology"/>